<proteinExistence type="evidence at transcript level"/>
<dbReference type="EMBL" id="AF071570">
    <property type="protein sequence ID" value="AAD34212.1"/>
    <property type="molecule type" value="mRNA"/>
</dbReference>
<dbReference type="SMR" id="Q9W678"/>
<dbReference type="GO" id="GO:0005737">
    <property type="term" value="C:cytoplasm"/>
    <property type="evidence" value="ECO:0000250"/>
    <property type="project" value="UniProtKB"/>
</dbReference>
<dbReference type="GO" id="GO:0005739">
    <property type="term" value="C:mitochondrion"/>
    <property type="evidence" value="ECO:0000250"/>
    <property type="project" value="UniProtKB"/>
</dbReference>
<dbReference type="GO" id="GO:0005634">
    <property type="term" value="C:nucleus"/>
    <property type="evidence" value="ECO:0000250"/>
    <property type="project" value="UniProtKB"/>
</dbReference>
<dbReference type="GO" id="GO:0000981">
    <property type="term" value="F:DNA-binding transcription factor activity, RNA polymerase II-specific"/>
    <property type="evidence" value="ECO:0007669"/>
    <property type="project" value="TreeGrafter"/>
</dbReference>
<dbReference type="GO" id="GO:0046872">
    <property type="term" value="F:metal ion binding"/>
    <property type="evidence" value="ECO:0007669"/>
    <property type="project" value="UniProtKB-KW"/>
</dbReference>
<dbReference type="GO" id="GO:0140693">
    <property type="term" value="F:molecular condensate scaffold activity"/>
    <property type="evidence" value="ECO:0000250"/>
    <property type="project" value="UniProtKB"/>
</dbReference>
<dbReference type="GO" id="GO:1990841">
    <property type="term" value="F:promoter-specific chromatin binding"/>
    <property type="evidence" value="ECO:0000250"/>
    <property type="project" value="UniProtKB"/>
</dbReference>
<dbReference type="GO" id="GO:0000978">
    <property type="term" value="F:RNA polymerase II cis-regulatory region sequence-specific DNA binding"/>
    <property type="evidence" value="ECO:0007669"/>
    <property type="project" value="TreeGrafter"/>
</dbReference>
<dbReference type="GO" id="GO:0009653">
    <property type="term" value="P:anatomical structure morphogenesis"/>
    <property type="evidence" value="ECO:0007669"/>
    <property type="project" value="UniProtKB-ARBA"/>
</dbReference>
<dbReference type="GO" id="GO:0006915">
    <property type="term" value="P:apoptotic process"/>
    <property type="evidence" value="ECO:0007669"/>
    <property type="project" value="UniProtKB-KW"/>
</dbReference>
<dbReference type="GO" id="GO:0006974">
    <property type="term" value="P:DNA damage response"/>
    <property type="evidence" value="ECO:0000250"/>
    <property type="project" value="UniProtKB"/>
</dbReference>
<dbReference type="GO" id="GO:0060429">
    <property type="term" value="P:epithelium development"/>
    <property type="evidence" value="ECO:0007669"/>
    <property type="project" value="UniProtKB-ARBA"/>
</dbReference>
<dbReference type="GO" id="GO:0045944">
    <property type="term" value="P:positive regulation of transcription by RNA polymerase II"/>
    <property type="evidence" value="ECO:0000250"/>
    <property type="project" value="UniProtKB"/>
</dbReference>
<dbReference type="GO" id="GO:0051262">
    <property type="term" value="P:protein tetramerization"/>
    <property type="evidence" value="ECO:0007669"/>
    <property type="project" value="InterPro"/>
</dbReference>
<dbReference type="CDD" id="cd08367">
    <property type="entry name" value="P53"/>
    <property type="match status" value="1"/>
</dbReference>
<dbReference type="FunFam" id="2.60.40.720:FF:000003">
    <property type="entry name" value="Cellular tumor antigen p53"/>
    <property type="match status" value="1"/>
</dbReference>
<dbReference type="FunFam" id="4.10.170.10:FF:000005">
    <property type="entry name" value="Cellular tumor antigen p53"/>
    <property type="match status" value="1"/>
</dbReference>
<dbReference type="Gene3D" id="2.60.40.720">
    <property type="match status" value="1"/>
</dbReference>
<dbReference type="Gene3D" id="4.10.170.10">
    <property type="entry name" value="p53-like tetramerisation domain"/>
    <property type="match status" value="1"/>
</dbReference>
<dbReference type="InterPro" id="IPR008967">
    <property type="entry name" value="p53-like_TF_DNA-bd_sf"/>
</dbReference>
<dbReference type="InterPro" id="IPR012346">
    <property type="entry name" value="p53/RUNT-type_TF_DNA-bd_sf"/>
</dbReference>
<dbReference type="InterPro" id="IPR011615">
    <property type="entry name" value="p53_DNA-bd"/>
</dbReference>
<dbReference type="InterPro" id="IPR036674">
    <property type="entry name" value="p53_tetramer_sf"/>
</dbReference>
<dbReference type="InterPro" id="IPR010991">
    <property type="entry name" value="p53_tetrameristn"/>
</dbReference>
<dbReference type="InterPro" id="IPR002117">
    <property type="entry name" value="p53_tumour_suppressor"/>
</dbReference>
<dbReference type="PANTHER" id="PTHR11447">
    <property type="entry name" value="CELLULAR TUMOR ANTIGEN P53"/>
    <property type="match status" value="1"/>
</dbReference>
<dbReference type="PANTHER" id="PTHR11447:SF6">
    <property type="entry name" value="CELLULAR TUMOR ANTIGEN P53"/>
    <property type="match status" value="1"/>
</dbReference>
<dbReference type="Pfam" id="PF00870">
    <property type="entry name" value="P53"/>
    <property type="match status" value="1"/>
</dbReference>
<dbReference type="Pfam" id="PF07710">
    <property type="entry name" value="P53_tetramer"/>
    <property type="match status" value="1"/>
</dbReference>
<dbReference type="PRINTS" id="PR00386">
    <property type="entry name" value="P53SUPPRESSR"/>
</dbReference>
<dbReference type="SUPFAM" id="SSF47719">
    <property type="entry name" value="p53 tetramerization domain"/>
    <property type="match status" value="1"/>
</dbReference>
<dbReference type="SUPFAM" id="SSF49417">
    <property type="entry name" value="p53-like transcription factors"/>
    <property type="match status" value="1"/>
</dbReference>
<dbReference type="PROSITE" id="PS00348">
    <property type="entry name" value="P53"/>
    <property type="match status" value="1"/>
</dbReference>
<sequence length="369" mass="41234">MAESQEFAELWERNLISTQEAGTCWELINDEYLPSSFDPNIFDNVLTEQPQPSTSPPTASVPVATDYPGEHGFKLGFPQSGTAKSVTCTYSSDLNKLFCQLAKTCPVQMVVNVAPPQGSVIRATAIYKKSEHVAEVVRRCPHHERTPDGDGLAPAAHLIRVEGNSRALYREDDVNSRHSVVVPYEVPQLGSEFTTVLYNFMCNSSCMGGMNRRPILTIISLETHDGQLLGRRSFEVRVCACPGRDRKTEESNFRKDQETKTLDKIPSANKRSLTKDSTSSVPRPEGSKKAKLSGSSDEEIYTLQVRGKERYEMLKKINDSLELSDVVPPSEMDRYRQKLLTKGKKKDGQTPEPKRGKKLMVKDEKSDSD</sequence>
<reference key="1">
    <citation type="submission" date="1998-06" db="EMBL/GenBank/DDBJ databases">
        <title>Evolutionary conservancy of p53 gene sequences in fish.</title>
        <authorList>
            <person name="Bhaskaran A."/>
            <person name="May D."/>
            <person name="Rand-Weaver M."/>
            <person name="Tyler C.R."/>
        </authorList>
    </citation>
    <scope>NUCLEOTIDE SEQUENCE [MRNA]</scope>
</reference>
<name>P53_BARBU</name>
<gene>
    <name type="primary">tp53</name>
    <name type="synonym">p53</name>
</gene>
<evidence type="ECO:0000250" key="1"/>
<evidence type="ECO:0000250" key="2">
    <source>
        <dbReference type="UniProtKB" id="P04637"/>
    </source>
</evidence>
<evidence type="ECO:0000256" key="3">
    <source>
        <dbReference type="SAM" id="MobiDB-lite"/>
    </source>
</evidence>
<evidence type="ECO:0000305" key="4"/>
<protein>
    <recommendedName>
        <fullName>Cellular tumor antigen p53</fullName>
    </recommendedName>
    <alternativeName>
        <fullName>Tumor suppressor p53</fullName>
    </alternativeName>
</protein>
<comment type="function">
    <text evidence="1">Multifunctional transcription factor that induces cell cycle arrest, DNA repair or apoptosis upon binding to its target DNA sequence. Acts as a tumor suppressor in many tumor types; induces growth arrest or apoptosis depending on the physiological circumstances and cell type. Negatively regulates cell division by controlling expression of a set of genes required for this process. One of the activated genes is an inhibitor of cyclin-dependent kinases. Apoptosis induction seems to be mediated either by stimulation of BAX and FAS antigen expression, or by repression of Bcl-2 expression (By similarity).</text>
</comment>
<comment type="cofactor">
    <cofactor evidence="1">
        <name>Zn(2+)</name>
        <dbReference type="ChEBI" id="CHEBI:29105"/>
    </cofactor>
    <text evidence="1">Binds 1 zinc ion per subunit.</text>
</comment>
<comment type="subunit">
    <text evidence="1">Binds DNA as a homotetramer.</text>
</comment>
<comment type="subcellular location">
    <subcellularLocation>
        <location evidence="1">Cytoplasm</location>
    </subcellularLocation>
    <subcellularLocation>
        <location evidence="1">Nucleus</location>
    </subcellularLocation>
</comment>
<comment type="domain">
    <text evidence="2">The N-terminal and C-terminal disordered regions undergo liquid-liquid phase separation (LLPS) following homotetramerization and activation. Post-translational modifications, such as phosphorylation or lactylation affect the ability to undergo LLPS.</text>
</comment>
<comment type="domain">
    <text evidence="2">The nuclear export signal acts as a transcriptional repression domain. The TADI and TADII motifs (residues 17 to 25 and 48 to 56) correspond both to 9aaTAD motifs which are transactivation domains present in a large number of yeast and animal transcription factors.</text>
</comment>
<comment type="similarity">
    <text evidence="4">Belongs to the p53 family.</text>
</comment>
<organism>
    <name type="scientific">Barbus barbus</name>
    <name type="common">Barbel</name>
    <name type="synonym">Cyprinus barbus</name>
    <dbReference type="NCBI Taxonomy" id="40830"/>
    <lineage>
        <taxon>Eukaryota</taxon>
        <taxon>Metazoa</taxon>
        <taxon>Chordata</taxon>
        <taxon>Craniata</taxon>
        <taxon>Vertebrata</taxon>
        <taxon>Euteleostomi</taxon>
        <taxon>Actinopterygii</taxon>
        <taxon>Neopterygii</taxon>
        <taxon>Teleostei</taxon>
        <taxon>Ostariophysi</taxon>
        <taxon>Cypriniformes</taxon>
        <taxon>Cyprinidae</taxon>
        <taxon>Barbinae</taxon>
        <taxon>Barbus</taxon>
    </lineage>
</organism>
<keyword id="KW-0010">Activator</keyword>
<keyword id="KW-0053">Apoptosis</keyword>
<keyword id="KW-0131">Cell cycle</keyword>
<keyword id="KW-0963">Cytoplasm</keyword>
<keyword id="KW-0238">DNA-binding</keyword>
<keyword id="KW-0479">Metal-binding</keyword>
<keyword id="KW-0539">Nucleus</keyword>
<keyword id="KW-0597">Phosphoprotein</keyword>
<keyword id="KW-0804">Transcription</keyword>
<keyword id="KW-0805">Transcription regulation</keyword>
<keyword id="KW-0043">Tumor suppressor</keyword>
<keyword id="KW-0862">Zinc</keyword>
<accession>Q9W678</accession>
<feature type="chain" id="PRO_0000185717" description="Cellular tumor antigen p53">
    <location>
        <begin position="1"/>
        <end position="369"/>
    </location>
</feature>
<feature type="DNA-binding region" evidence="1">
    <location>
        <begin position="66"/>
        <end position="256"/>
    </location>
</feature>
<feature type="region of interest" description="Transcription activation (acidic)">
    <location>
        <begin position="1"/>
        <end position="28"/>
    </location>
</feature>
<feature type="region of interest" description="Interaction with DNA" evidence="1">
    <location>
        <begin position="237"/>
        <end position="244"/>
    </location>
</feature>
<feature type="region of interest" description="Disordered" evidence="3">
    <location>
        <begin position="246"/>
        <end position="296"/>
    </location>
</feature>
<feature type="region of interest" description="Oligomerization">
    <location>
        <begin position="298"/>
        <end position="329"/>
    </location>
</feature>
<feature type="region of interest" description="Disordered" evidence="3">
    <location>
        <begin position="318"/>
        <end position="369"/>
    </location>
</feature>
<feature type="region of interest" description="Basic (repression of DNA-binding)">
    <location>
        <begin position="342"/>
        <end position="365"/>
    </location>
</feature>
<feature type="short sequence motif" description="Bipartite nuclear localization signal" evidence="1">
    <location>
        <begin position="270"/>
        <end position="289"/>
    </location>
</feature>
<feature type="short sequence motif" description="Nuclear export signal" evidence="1">
    <location>
        <begin position="312"/>
        <end position="323"/>
    </location>
</feature>
<feature type="compositionally biased region" description="Basic and acidic residues" evidence="3">
    <location>
        <begin position="246"/>
        <end position="263"/>
    </location>
</feature>
<feature type="compositionally biased region" description="Polar residues" evidence="3">
    <location>
        <begin position="269"/>
        <end position="281"/>
    </location>
</feature>
<feature type="compositionally biased region" description="Basic and acidic residues" evidence="3">
    <location>
        <begin position="346"/>
        <end position="369"/>
    </location>
</feature>
<feature type="binding site" evidence="1">
    <location>
        <position position="140"/>
    </location>
    <ligand>
        <name>Zn(2+)</name>
        <dbReference type="ChEBI" id="CHEBI:29105"/>
    </ligand>
</feature>
<feature type="binding site" evidence="1">
    <location>
        <position position="143"/>
    </location>
    <ligand>
        <name>Zn(2+)</name>
        <dbReference type="ChEBI" id="CHEBI:29105"/>
    </ligand>
</feature>
<feature type="binding site" evidence="1">
    <location>
        <position position="202"/>
    </location>
    <ligand>
        <name>Zn(2+)</name>
        <dbReference type="ChEBI" id="CHEBI:29105"/>
    </ligand>
</feature>
<feature type="binding site" evidence="1">
    <location>
        <position position="206"/>
    </location>
    <ligand>
        <name>Zn(2+)</name>
        <dbReference type="ChEBI" id="CHEBI:29105"/>
    </ligand>
</feature>
<feature type="site" description="Interaction with DNA" evidence="1">
    <location>
        <position position="84"/>
    </location>
</feature>